<keyword id="KW-0012">Acyltransferase</keyword>
<keyword id="KW-0963">Cytoplasm</keyword>
<keyword id="KW-1185">Reference proteome</keyword>
<keyword id="KW-0808">Transferase</keyword>
<protein>
    <recommendedName>
        <fullName evidence="1">Aspartate/glutamate leucyltransferase</fullName>
        <ecNumber evidence="1">2.3.2.29</ecNumber>
    </recommendedName>
</protein>
<feature type="chain" id="PRO_1000131999" description="Aspartate/glutamate leucyltransferase">
    <location>
        <begin position="1"/>
        <end position="251"/>
    </location>
</feature>
<comment type="function">
    <text evidence="1">Functions in the N-end rule pathway of protein degradation where it conjugates Leu from its aminoacyl-tRNA to the N-termini of proteins containing an N-terminal aspartate or glutamate.</text>
</comment>
<comment type="catalytic activity">
    <reaction evidence="1">
        <text>N-terminal L-glutamyl-[protein] + L-leucyl-tRNA(Leu) = N-terminal L-leucyl-L-glutamyl-[protein] + tRNA(Leu) + H(+)</text>
        <dbReference type="Rhea" id="RHEA:50412"/>
        <dbReference type="Rhea" id="RHEA-COMP:9613"/>
        <dbReference type="Rhea" id="RHEA-COMP:9622"/>
        <dbReference type="Rhea" id="RHEA-COMP:12664"/>
        <dbReference type="Rhea" id="RHEA-COMP:12668"/>
        <dbReference type="ChEBI" id="CHEBI:15378"/>
        <dbReference type="ChEBI" id="CHEBI:64721"/>
        <dbReference type="ChEBI" id="CHEBI:78442"/>
        <dbReference type="ChEBI" id="CHEBI:78494"/>
        <dbReference type="ChEBI" id="CHEBI:133041"/>
        <dbReference type="EC" id="2.3.2.29"/>
    </reaction>
</comment>
<comment type="catalytic activity">
    <reaction evidence="1">
        <text>N-terminal L-aspartyl-[protein] + L-leucyl-tRNA(Leu) = N-terminal L-leucyl-L-aspartyl-[protein] + tRNA(Leu) + H(+)</text>
        <dbReference type="Rhea" id="RHEA:50420"/>
        <dbReference type="Rhea" id="RHEA-COMP:9613"/>
        <dbReference type="Rhea" id="RHEA-COMP:9622"/>
        <dbReference type="Rhea" id="RHEA-COMP:12669"/>
        <dbReference type="Rhea" id="RHEA-COMP:12674"/>
        <dbReference type="ChEBI" id="CHEBI:15378"/>
        <dbReference type="ChEBI" id="CHEBI:64720"/>
        <dbReference type="ChEBI" id="CHEBI:78442"/>
        <dbReference type="ChEBI" id="CHEBI:78494"/>
        <dbReference type="ChEBI" id="CHEBI:133042"/>
        <dbReference type="EC" id="2.3.2.29"/>
    </reaction>
</comment>
<comment type="subcellular location">
    <subcellularLocation>
        <location evidence="1">Cytoplasm</location>
    </subcellularLocation>
</comment>
<comment type="similarity">
    <text evidence="1">Belongs to the R-transferase family. Bpt subfamily.</text>
</comment>
<sequence>MAIHGDRDDELRLFQTGEHPCGYWSDRVARDLVLDPNDRRLGALYPLALSWGFRRSGDLVYRPHCAHCQACVAVRIPVARFAPDRSQRRCAARNADLEVRITAATARDDLFALYHRYLTHRHANGGMDDHGPHEFEQFLIGSWSHTRFMEMRLPGHDGQPSQLLGVAVTDVTEHGLSAVYTFFDPDHAARGLGTFAILQQIEWARREGLPHVYLGYWIRGHQKMDYKRRFHPLEAYDGRRWHDFDNDLDGR</sequence>
<dbReference type="EC" id="2.3.2.29" evidence="1"/>
<dbReference type="EMBL" id="AM743169">
    <property type="protein sequence ID" value="CAQ44818.1"/>
    <property type="molecule type" value="Genomic_DNA"/>
</dbReference>
<dbReference type="RefSeq" id="WP_005408547.1">
    <property type="nucleotide sequence ID" value="NC_010943.1"/>
</dbReference>
<dbReference type="SMR" id="B2FTC1"/>
<dbReference type="EnsemblBacteria" id="CAQ44818">
    <property type="protein sequence ID" value="CAQ44818"/>
    <property type="gene ID" value="Smlt1266"/>
</dbReference>
<dbReference type="KEGG" id="sml:Smlt1266"/>
<dbReference type="eggNOG" id="COG2935">
    <property type="taxonomic scope" value="Bacteria"/>
</dbReference>
<dbReference type="HOGENOM" id="CLU_077607_0_0_6"/>
<dbReference type="Proteomes" id="UP000008840">
    <property type="component" value="Chromosome"/>
</dbReference>
<dbReference type="GO" id="GO:0005737">
    <property type="term" value="C:cytoplasm"/>
    <property type="evidence" value="ECO:0007669"/>
    <property type="project" value="UniProtKB-SubCell"/>
</dbReference>
<dbReference type="GO" id="GO:0004057">
    <property type="term" value="F:arginyl-tRNA--protein transferase activity"/>
    <property type="evidence" value="ECO:0007669"/>
    <property type="project" value="InterPro"/>
</dbReference>
<dbReference type="GO" id="GO:0008914">
    <property type="term" value="F:leucyl-tRNA--protein transferase activity"/>
    <property type="evidence" value="ECO:0007669"/>
    <property type="project" value="UniProtKB-UniRule"/>
</dbReference>
<dbReference type="GO" id="GO:0071596">
    <property type="term" value="P:ubiquitin-dependent protein catabolic process via the N-end rule pathway"/>
    <property type="evidence" value="ECO:0007669"/>
    <property type="project" value="InterPro"/>
</dbReference>
<dbReference type="HAMAP" id="MF_00689">
    <property type="entry name" value="Bpt"/>
    <property type="match status" value="1"/>
</dbReference>
<dbReference type="InterPro" id="IPR016181">
    <property type="entry name" value="Acyl_CoA_acyltransferase"/>
</dbReference>
<dbReference type="InterPro" id="IPR017138">
    <property type="entry name" value="Asp_Glu_LeuTrfase"/>
</dbReference>
<dbReference type="InterPro" id="IPR030700">
    <property type="entry name" value="N-end_Aminoacyl_Trfase"/>
</dbReference>
<dbReference type="InterPro" id="IPR007472">
    <property type="entry name" value="N-end_Aminoacyl_Trfase_C"/>
</dbReference>
<dbReference type="InterPro" id="IPR007471">
    <property type="entry name" value="N-end_Aminoacyl_Trfase_N"/>
</dbReference>
<dbReference type="NCBIfam" id="NF002341">
    <property type="entry name" value="PRK01305.1-1"/>
    <property type="match status" value="1"/>
</dbReference>
<dbReference type="NCBIfam" id="NF002342">
    <property type="entry name" value="PRK01305.1-3"/>
    <property type="match status" value="1"/>
</dbReference>
<dbReference type="NCBIfam" id="NF002346">
    <property type="entry name" value="PRK01305.2-3"/>
    <property type="match status" value="1"/>
</dbReference>
<dbReference type="PANTHER" id="PTHR21367">
    <property type="entry name" value="ARGININE-TRNA-PROTEIN TRANSFERASE 1"/>
    <property type="match status" value="1"/>
</dbReference>
<dbReference type="PANTHER" id="PTHR21367:SF1">
    <property type="entry name" value="ARGINYL-TRNA--PROTEIN TRANSFERASE 1"/>
    <property type="match status" value="1"/>
</dbReference>
<dbReference type="Pfam" id="PF04377">
    <property type="entry name" value="ATE_C"/>
    <property type="match status" value="1"/>
</dbReference>
<dbReference type="Pfam" id="PF04376">
    <property type="entry name" value="ATE_N"/>
    <property type="match status" value="1"/>
</dbReference>
<dbReference type="PIRSF" id="PIRSF037208">
    <property type="entry name" value="ATE_pro_prd"/>
    <property type="match status" value="1"/>
</dbReference>
<dbReference type="SUPFAM" id="SSF55729">
    <property type="entry name" value="Acyl-CoA N-acyltransferases (Nat)"/>
    <property type="match status" value="1"/>
</dbReference>
<proteinExistence type="inferred from homology"/>
<organism>
    <name type="scientific">Stenotrophomonas maltophilia (strain K279a)</name>
    <dbReference type="NCBI Taxonomy" id="522373"/>
    <lineage>
        <taxon>Bacteria</taxon>
        <taxon>Pseudomonadati</taxon>
        <taxon>Pseudomonadota</taxon>
        <taxon>Gammaproteobacteria</taxon>
        <taxon>Lysobacterales</taxon>
        <taxon>Lysobacteraceae</taxon>
        <taxon>Stenotrophomonas</taxon>
        <taxon>Stenotrophomonas maltophilia group</taxon>
    </lineage>
</organism>
<evidence type="ECO:0000255" key="1">
    <source>
        <dbReference type="HAMAP-Rule" id="MF_00689"/>
    </source>
</evidence>
<gene>
    <name evidence="1" type="primary">bpt</name>
    <name type="ordered locus">Smlt1266</name>
</gene>
<reference key="1">
    <citation type="journal article" date="2008" name="Genome Biol.">
        <title>The complete genome, comparative and functional analysis of Stenotrophomonas maltophilia reveals an organism heavily shielded by drug resistance determinants.</title>
        <authorList>
            <person name="Crossman L.C."/>
            <person name="Gould V.C."/>
            <person name="Dow J.M."/>
            <person name="Vernikos G.S."/>
            <person name="Okazaki A."/>
            <person name="Sebaihia M."/>
            <person name="Saunders D."/>
            <person name="Arrowsmith C."/>
            <person name="Carver T."/>
            <person name="Peters N."/>
            <person name="Adlem E."/>
            <person name="Kerhornou A."/>
            <person name="Lord A."/>
            <person name="Murphy L."/>
            <person name="Seeger K."/>
            <person name="Squares R."/>
            <person name="Rutter S."/>
            <person name="Quail M.A."/>
            <person name="Rajandream M.A."/>
            <person name="Harris D."/>
            <person name="Churcher C."/>
            <person name="Bentley S.D."/>
            <person name="Parkhill J."/>
            <person name="Thomson N.R."/>
            <person name="Avison M.B."/>
        </authorList>
    </citation>
    <scope>NUCLEOTIDE SEQUENCE [LARGE SCALE GENOMIC DNA]</scope>
    <source>
        <strain>K279a</strain>
    </source>
</reference>
<accession>B2FTC1</accession>
<name>BPT_STRMK</name>